<accession>Q755L7</accession>
<organism>
    <name type="scientific">Eremothecium gossypii (strain ATCC 10895 / CBS 109.51 / FGSC 9923 / NRRL Y-1056)</name>
    <name type="common">Yeast</name>
    <name type="synonym">Ashbya gossypii</name>
    <dbReference type="NCBI Taxonomy" id="284811"/>
    <lineage>
        <taxon>Eukaryota</taxon>
        <taxon>Fungi</taxon>
        <taxon>Dikarya</taxon>
        <taxon>Ascomycota</taxon>
        <taxon>Saccharomycotina</taxon>
        <taxon>Saccharomycetes</taxon>
        <taxon>Saccharomycetales</taxon>
        <taxon>Saccharomycetaceae</taxon>
        <taxon>Eremothecium</taxon>
    </lineage>
</organism>
<feature type="chain" id="PRO_0000072325" description="Ceramide-binding protein SVF1">
    <location>
        <begin position="1"/>
        <end position="385"/>
    </location>
</feature>
<feature type="region of interest" description="Peripherally associates with membranes" evidence="1">
    <location>
        <begin position="1"/>
        <end position="18"/>
    </location>
</feature>
<dbReference type="EMBL" id="AE016819">
    <property type="protein sequence ID" value="AAS53171.1"/>
    <property type="molecule type" value="Genomic_DNA"/>
</dbReference>
<dbReference type="RefSeq" id="NP_985347.1">
    <property type="nucleotide sequence ID" value="NM_210701.1"/>
</dbReference>
<dbReference type="FunCoup" id="Q755L7">
    <property type="interactions" value="125"/>
</dbReference>
<dbReference type="STRING" id="284811.Q755L7"/>
<dbReference type="EnsemblFungi" id="AAS53171">
    <property type="protein sequence ID" value="AAS53171"/>
    <property type="gene ID" value="AGOS_AFL203C"/>
</dbReference>
<dbReference type="GeneID" id="4621572"/>
<dbReference type="KEGG" id="ago:AGOS_AFL203C"/>
<dbReference type="eggNOG" id="ENOG502QQY3">
    <property type="taxonomic scope" value="Eukaryota"/>
</dbReference>
<dbReference type="HOGENOM" id="CLU_030205_2_0_1"/>
<dbReference type="InParanoid" id="Q755L7"/>
<dbReference type="OMA" id="AFWPRCV"/>
<dbReference type="OrthoDB" id="2590239at2759"/>
<dbReference type="Proteomes" id="UP000000591">
    <property type="component" value="Chromosome VI"/>
</dbReference>
<dbReference type="GO" id="GO:0033106">
    <property type="term" value="C:cis-Golgi network membrane"/>
    <property type="evidence" value="ECO:0000250"/>
    <property type="project" value="UniProtKB"/>
</dbReference>
<dbReference type="GO" id="GO:0005737">
    <property type="term" value="C:cytoplasm"/>
    <property type="evidence" value="ECO:0000250"/>
    <property type="project" value="UniProtKB"/>
</dbReference>
<dbReference type="GO" id="GO:0005789">
    <property type="term" value="C:endoplasmic reticulum membrane"/>
    <property type="evidence" value="ECO:0007669"/>
    <property type="project" value="UniProtKB-SubCell"/>
</dbReference>
<dbReference type="GO" id="GO:0005634">
    <property type="term" value="C:nucleus"/>
    <property type="evidence" value="ECO:0007669"/>
    <property type="project" value="UniProtKB-SubCell"/>
</dbReference>
<dbReference type="GO" id="GO:0097001">
    <property type="term" value="F:ceramide binding"/>
    <property type="evidence" value="ECO:0000250"/>
    <property type="project" value="UniProtKB"/>
</dbReference>
<dbReference type="GO" id="GO:0035621">
    <property type="term" value="P:ER to Golgi ceramide transport"/>
    <property type="evidence" value="ECO:0000250"/>
    <property type="project" value="UniProtKB"/>
</dbReference>
<dbReference type="GO" id="GO:0006979">
    <property type="term" value="P:response to oxidative stress"/>
    <property type="evidence" value="ECO:0007669"/>
    <property type="project" value="InterPro"/>
</dbReference>
<dbReference type="InterPro" id="IPR051385">
    <property type="entry name" value="Ceramide-binding_SVF1"/>
</dbReference>
<dbReference type="InterPro" id="IPR033394">
    <property type="entry name" value="Svf1-like_C"/>
</dbReference>
<dbReference type="InterPro" id="IPR013931">
    <property type="entry name" value="Svf1-like_N"/>
</dbReference>
<dbReference type="PANTHER" id="PTHR47107:SF1">
    <property type="entry name" value="CERAMIDE-BINDING PROTEIN SVF1-RELATED"/>
    <property type="match status" value="1"/>
</dbReference>
<dbReference type="PANTHER" id="PTHR47107">
    <property type="entry name" value="SVF1-LIKE PROTEIN YDR222W-RELATED"/>
    <property type="match status" value="1"/>
</dbReference>
<dbReference type="Pfam" id="PF08622">
    <property type="entry name" value="Svf1"/>
    <property type="match status" value="1"/>
</dbReference>
<dbReference type="Pfam" id="PF17187">
    <property type="entry name" value="Svf1_C"/>
    <property type="match status" value="1"/>
</dbReference>
<dbReference type="SUPFAM" id="SSF159245">
    <property type="entry name" value="AttH-like"/>
    <property type="match status" value="1"/>
</dbReference>
<reference key="1">
    <citation type="journal article" date="2004" name="Science">
        <title>The Ashbya gossypii genome as a tool for mapping the ancient Saccharomyces cerevisiae genome.</title>
        <authorList>
            <person name="Dietrich F.S."/>
            <person name="Voegeli S."/>
            <person name="Brachat S."/>
            <person name="Lerch A."/>
            <person name="Gates K."/>
            <person name="Steiner S."/>
            <person name="Mohr C."/>
            <person name="Poehlmann R."/>
            <person name="Luedi P."/>
            <person name="Choi S."/>
            <person name="Wing R.A."/>
            <person name="Flavier A."/>
            <person name="Gaffney T.D."/>
            <person name="Philippsen P."/>
        </authorList>
    </citation>
    <scope>NUCLEOTIDE SEQUENCE [LARGE SCALE GENOMIC DNA]</scope>
    <source>
        <strain>ATCC 10895 / CBS 109.51 / FGSC 9923 / NRRL Y-1056</strain>
    </source>
</reference>
<reference key="2">
    <citation type="journal article" date="2013" name="G3 (Bethesda)">
        <title>Genomes of Ashbya fungi isolated from insects reveal four mating-type loci, numerous translocations, lack of transposons, and distinct gene duplications.</title>
        <authorList>
            <person name="Dietrich F.S."/>
            <person name="Voegeli S."/>
            <person name="Kuo S."/>
            <person name="Philippsen P."/>
        </authorList>
    </citation>
    <scope>GENOME REANNOTATION</scope>
    <source>
        <strain>ATCC 10895 / CBS 109.51 / FGSC 9923 / NRRL Y-1056</strain>
    </source>
</reference>
<comment type="function">
    <text evidence="1">Ceramide-binding protein that may transfer ceramides from the endoplasmic reticulum membrane to the cis-Golgi network membrane, and is thereby required for the biosynthesis of complex sphingolipids.</text>
</comment>
<comment type="subcellular location">
    <subcellularLocation>
        <location evidence="1">Golgi apparatus</location>
        <location evidence="1">cis-Golgi network membrane</location>
        <topology evidence="1">Peripheral membrane protein</topology>
    </subcellularLocation>
    <subcellularLocation>
        <location evidence="1">Endoplasmic reticulum membrane</location>
        <topology evidence="1">Peripheral membrane protein</topology>
    </subcellularLocation>
    <subcellularLocation>
        <location evidence="1">Cytoplasm</location>
    </subcellularLocation>
    <subcellularLocation>
        <location evidence="1">Nucleus</location>
    </subcellularLocation>
    <text evidence="1">Localizes to the interface between the cis-Golgi network and endoplasmic reticulum exit sites.</text>
</comment>
<comment type="similarity">
    <text evidence="2">Belongs to the SVF1 family.</text>
</comment>
<gene>
    <name type="primary">SVF1</name>
    <name type="ordered locus">AFL203C</name>
</gene>
<name>SVF1_EREGS</name>
<keyword id="KW-0963">Cytoplasm</keyword>
<keyword id="KW-0256">Endoplasmic reticulum</keyword>
<keyword id="KW-0333">Golgi apparatus</keyword>
<keyword id="KW-0445">Lipid transport</keyword>
<keyword id="KW-0472">Membrane</keyword>
<keyword id="KW-0539">Nucleus</keyword>
<keyword id="KW-1185">Reference proteome</keyword>
<keyword id="KW-0813">Transport</keyword>
<sequence>MLKWIQGGISSVTGIAEPEYGPEFIHSATERVRGKQPFHETSRQDLAWRNISSTHVETATFYFTQIQTGMAGFAQIIYSKIGGLPRTAQFTFRLHHASRPELGTWTSTKLENFRVEGANFYADNLSLELDSTATSYTLQSSVTADSVVDITFKRLTPGVKVGEDPTTYYGDNTKEPWGTMRHVFWPRNSVNGTVVVHGEMITLKNDYSVMILALQGMKPHHAAKAWNFLNFHSETHSVLLMEFTTPKSYANTKVSIGILCDKDSVLSVTIDNEVEHVKPKTDEVGWPVPKALSMKFTGIPSSVPDKEVASAEKLSARVDIELKNLVERVDVMAEIPAFVKNIVSGVVGTKPYIYQYANEALLTYAGSEYKGFAWSEVTFISEFEN</sequence>
<proteinExistence type="inferred from homology"/>
<protein>
    <recommendedName>
        <fullName evidence="2">Ceramide-binding protein SVF1</fullName>
    </recommendedName>
    <alternativeName>
        <fullName>Survival factor 1</fullName>
    </alternativeName>
</protein>
<evidence type="ECO:0000250" key="1">
    <source>
        <dbReference type="UniProtKB" id="Q05515"/>
    </source>
</evidence>
<evidence type="ECO:0000305" key="2"/>